<sequence>MEGPEVTDGDNVLNLTHLGLENLNLELVSENKRKDVQQLLLPHNRLVVLPPHVNSFTHLHLLDISNNNMAYIGEEILGLTKLKTLLAKNNRLDEFSFPKELGGLRLEVLNLSGNRFEEIPDQFLQIQTLKSLSLGGNRLKSIPAEIENLISLEFLYLGGNFISSIPPELANLPYLSYLVLCDNRIQSVPPQLAQVHSLRSLSLHNLLTYLPREILSLVQLQELSLRGNPLVVRFVRDLTYTPPTLLELAGRTVKSRGIPYCPQELPENLLMYLDLASKCPNPKCGGVYFDCCVRQIKFVDFCGKYRLPLMHYLCSPECSSPCGSTSQSESDSEDEANAAARRMQKVLLG</sequence>
<gene>
    <name type="primary">lrrc58</name>
</gene>
<keyword id="KW-0433">Leucine-rich repeat</keyword>
<keyword id="KW-1185">Reference proteome</keyword>
<keyword id="KW-0677">Repeat</keyword>
<organism>
    <name type="scientific">Xenopus tropicalis</name>
    <name type="common">Western clawed frog</name>
    <name type="synonym">Silurana tropicalis</name>
    <dbReference type="NCBI Taxonomy" id="8364"/>
    <lineage>
        <taxon>Eukaryota</taxon>
        <taxon>Metazoa</taxon>
        <taxon>Chordata</taxon>
        <taxon>Craniata</taxon>
        <taxon>Vertebrata</taxon>
        <taxon>Euteleostomi</taxon>
        <taxon>Amphibia</taxon>
        <taxon>Batrachia</taxon>
        <taxon>Anura</taxon>
        <taxon>Pipoidea</taxon>
        <taxon>Pipidae</taxon>
        <taxon>Xenopodinae</taxon>
        <taxon>Xenopus</taxon>
        <taxon>Silurana</taxon>
    </lineage>
</organism>
<feature type="chain" id="PRO_0000312020" description="Leucine-rich repeat-containing protein 58">
    <location>
        <begin position="1"/>
        <end position="349"/>
    </location>
</feature>
<feature type="repeat" description="LRR 1">
    <location>
        <begin position="14"/>
        <end position="34"/>
    </location>
</feature>
<feature type="repeat" description="LRR 2">
    <location>
        <begin position="35"/>
        <end position="56"/>
    </location>
</feature>
<feature type="repeat" description="LRR 3">
    <location>
        <begin position="58"/>
        <end position="80"/>
    </location>
</feature>
<feature type="repeat" description="LRR 4">
    <location>
        <begin position="81"/>
        <end position="102"/>
    </location>
</feature>
<feature type="repeat" description="LRR 5">
    <location>
        <begin position="105"/>
        <end position="125"/>
    </location>
</feature>
<feature type="repeat" description="LRR 6">
    <location>
        <begin position="128"/>
        <end position="149"/>
    </location>
</feature>
<feature type="repeat" description="LRR 7">
    <location>
        <begin position="151"/>
        <end position="173"/>
    </location>
</feature>
<feature type="repeat" description="LRR 8">
    <location>
        <begin position="174"/>
        <end position="195"/>
    </location>
</feature>
<feature type="repeat" description="LRR 9">
    <location>
        <begin position="197"/>
        <end position="217"/>
    </location>
</feature>
<feature type="repeat" description="LRR 10">
    <location>
        <begin position="219"/>
        <end position="239"/>
    </location>
</feature>
<protein>
    <recommendedName>
        <fullName>Leucine-rich repeat-containing protein 58</fullName>
    </recommendedName>
</protein>
<accession>A4IHG1</accession>
<proteinExistence type="evidence at transcript level"/>
<name>LRC58_XENTR</name>
<reference key="1">
    <citation type="submission" date="2007-03" db="EMBL/GenBank/DDBJ databases">
        <authorList>
            <consortium name="NIH - Xenopus Gene Collection (XGC) project"/>
        </authorList>
    </citation>
    <scope>NUCLEOTIDE SEQUENCE [LARGE SCALE MRNA]</scope>
    <source>
        <tissue>Embryo</tissue>
    </source>
</reference>
<dbReference type="EMBL" id="BC135510">
    <property type="protein sequence ID" value="AAI35511.1"/>
    <property type="molecule type" value="mRNA"/>
</dbReference>
<dbReference type="RefSeq" id="NP_001165009.1">
    <property type="nucleotide sequence ID" value="NM_001171538.1"/>
</dbReference>
<dbReference type="SMR" id="A4IHG1"/>
<dbReference type="FunCoup" id="A4IHG1">
    <property type="interactions" value="659"/>
</dbReference>
<dbReference type="STRING" id="8364.ENSXETP00000004577"/>
<dbReference type="GeneID" id="100328949"/>
<dbReference type="KEGG" id="xtr:100328949"/>
<dbReference type="AGR" id="Xenbase:XB-GENE-963289"/>
<dbReference type="CTD" id="116064"/>
<dbReference type="Xenbase" id="XB-GENE-963289">
    <property type="gene designation" value="lrrc58"/>
</dbReference>
<dbReference type="InParanoid" id="A4IHG1"/>
<dbReference type="OMA" id="GLSQWFP"/>
<dbReference type="OrthoDB" id="1053178at2759"/>
<dbReference type="Proteomes" id="UP000008143">
    <property type="component" value="Chromosome 2"/>
</dbReference>
<dbReference type="Gene3D" id="3.80.10.10">
    <property type="entry name" value="Ribonuclease Inhibitor"/>
    <property type="match status" value="2"/>
</dbReference>
<dbReference type="InterPro" id="IPR001611">
    <property type="entry name" value="Leu-rich_rpt"/>
</dbReference>
<dbReference type="InterPro" id="IPR003591">
    <property type="entry name" value="Leu-rich_rpt_typical-subtyp"/>
</dbReference>
<dbReference type="InterPro" id="IPR050715">
    <property type="entry name" value="LRR-SigEffector_domain"/>
</dbReference>
<dbReference type="InterPro" id="IPR032675">
    <property type="entry name" value="LRR_dom_sf"/>
</dbReference>
<dbReference type="PANTHER" id="PTHR45752">
    <property type="entry name" value="LEUCINE-RICH REPEAT-CONTAINING"/>
    <property type="match status" value="1"/>
</dbReference>
<dbReference type="PANTHER" id="PTHR45752:SF13">
    <property type="entry name" value="LEUCINE-RICH REPEAT-CONTAINING PROTEIN 58"/>
    <property type="match status" value="1"/>
</dbReference>
<dbReference type="Pfam" id="PF13855">
    <property type="entry name" value="LRR_8"/>
    <property type="match status" value="2"/>
</dbReference>
<dbReference type="SMART" id="SM00369">
    <property type="entry name" value="LRR_TYP"/>
    <property type="match status" value="6"/>
</dbReference>
<dbReference type="SUPFAM" id="SSF52058">
    <property type="entry name" value="L domain-like"/>
    <property type="match status" value="1"/>
</dbReference>
<dbReference type="PROSITE" id="PS51450">
    <property type="entry name" value="LRR"/>
    <property type="match status" value="9"/>
</dbReference>